<keyword id="KW-0028">Amino-acid biosynthesis</keyword>
<keyword id="KW-0963">Cytoplasm</keyword>
<keyword id="KW-0368">Histidine biosynthesis</keyword>
<keyword id="KW-0456">Lyase</keyword>
<dbReference type="EC" id="4.3.2.10" evidence="1"/>
<dbReference type="EMBL" id="AM774415">
    <property type="protein sequence ID" value="CAP13577.1"/>
    <property type="molecule type" value="Genomic_DNA"/>
</dbReference>
<dbReference type="RefSeq" id="WP_010902602.1">
    <property type="nucleotide sequence ID" value="NC_010364.1"/>
</dbReference>
<dbReference type="SMR" id="B0R4B2"/>
<dbReference type="EnsemblBacteria" id="CAP13577">
    <property type="protein sequence ID" value="CAP13577"/>
    <property type="gene ID" value="OE_2268R"/>
</dbReference>
<dbReference type="GeneID" id="89349278"/>
<dbReference type="KEGG" id="hsl:OE_2268R"/>
<dbReference type="HOGENOM" id="CLU_048577_4_0_2"/>
<dbReference type="PhylomeDB" id="B0R4B2"/>
<dbReference type="UniPathway" id="UPA00031">
    <property type="reaction ID" value="UER00010"/>
</dbReference>
<dbReference type="Proteomes" id="UP000001321">
    <property type="component" value="Chromosome"/>
</dbReference>
<dbReference type="GO" id="GO:0005737">
    <property type="term" value="C:cytoplasm"/>
    <property type="evidence" value="ECO:0007669"/>
    <property type="project" value="UniProtKB-SubCell"/>
</dbReference>
<dbReference type="GO" id="GO:0000107">
    <property type="term" value="F:imidazoleglycerol-phosphate synthase activity"/>
    <property type="evidence" value="ECO:0007669"/>
    <property type="project" value="UniProtKB-UniRule"/>
</dbReference>
<dbReference type="GO" id="GO:0016829">
    <property type="term" value="F:lyase activity"/>
    <property type="evidence" value="ECO:0007669"/>
    <property type="project" value="UniProtKB-KW"/>
</dbReference>
<dbReference type="GO" id="GO:0000105">
    <property type="term" value="P:L-histidine biosynthetic process"/>
    <property type="evidence" value="ECO:0007669"/>
    <property type="project" value="UniProtKB-UniRule"/>
</dbReference>
<dbReference type="CDD" id="cd04731">
    <property type="entry name" value="HisF"/>
    <property type="match status" value="1"/>
</dbReference>
<dbReference type="Gene3D" id="3.20.20.70">
    <property type="entry name" value="Aldolase class I"/>
    <property type="match status" value="1"/>
</dbReference>
<dbReference type="HAMAP" id="MF_01013">
    <property type="entry name" value="HisF"/>
    <property type="match status" value="1"/>
</dbReference>
<dbReference type="InterPro" id="IPR013785">
    <property type="entry name" value="Aldolase_TIM"/>
</dbReference>
<dbReference type="InterPro" id="IPR006062">
    <property type="entry name" value="His_biosynth"/>
</dbReference>
<dbReference type="InterPro" id="IPR004651">
    <property type="entry name" value="HisF"/>
</dbReference>
<dbReference type="InterPro" id="IPR050064">
    <property type="entry name" value="IGPS_HisA/HisF"/>
</dbReference>
<dbReference type="InterPro" id="IPR011060">
    <property type="entry name" value="RibuloseP-bd_barrel"/>
</dbReference>
<dbReference type="NCBIfam" id="TIGR00735">
    <property type="entry name" value="hisF"/>
    <property type="match status" value="1"/>
</dbReference>
<dbReference type="PANTHER" id="PTHR21235:SF2">
    <property type="entry name" value="IMIDAZOLE GLYCEROL PHOSPHATE SYNTHASE HISHF"/>
    <property type="match status" value="1"/>
</dbReference>
<dbReference type="PANTHER" id="PTHR21235">
    <property type="entry name" value="IMIDAZOLE GLYCEROL PHOSPHATE SYNTHASE SUBUNIT HISF/H IGP SYNTHASE SUBUNIT HISF/H"/>
    <property type="match status" value="1"/>
</dbReference>
<dbReference type="Pfam" id="PF00977">
    <property type="entry name" value="His_biosynth"/>
    <property type="match status" value="1"/>
</dbReference>
<dbReference type="SUPFAM" id="SSF51366">
    <property type="entry name" value="Ribulose-phoshate binding barrel"/>
    <property type="match status" value="1"/>
</dbReference>
<evidence type="ECO:0000255" key="1">
    <source>
        <dbReference type="HAMAP-Rule" id="MF_01013"/>
    </source>
</evidence>
<proteinExistence type="inferred from homology"/>
<feature type="chain" id="PRO_1000135006" description="Imidazole glycerol phosphate synthase subunit HisF">
    <location>
        <begin position="1"/>
        <end position="273"/>
    </location>
</feature>
<feature type="active site" evidence="1">
    <location>
        <position position="12"/>
    </location>
</feature>
<feature type="active site" evidence="1">
    <location>
        <position position="136"/>
    </location>
</feature>
<reference key="1">
    <citation type="journal article" date="2008" name="Genomics">
        <title>Evolution in the laboratory: the genome of Halobacterium salinarum strain R1 compared to that of strain NRC-1.</title>
        <authorList>
            <person name="Pfeiffer F."/>
            <person name="Schuster S.C."/>
            <person name="Broicher A."/>
            <person name="Falb M."/>
            <person name="Palm P."/>
            <person name="Rodewald K."/>
            <person name="Ruepp A."/>
            <person name="Soppa J."/>
            <person name="Tittor J."/>
            <person name="Oesterhelt D."/>
        </authorList>
    </citation>
    <scope>NUCLEOTIDE SEQUENCE [LARGE SCALE GENOMIC DNA]</scope>
    <source>
        <strain>ATCC 29341 / DSM 671 / R1</strain>
    </source>
</reference>
<comment type="function">
    <text evidence="1">IGPS catalyzes the conversion of PRFAR and glutamine to IGP, AICAR and glutamate. The HisF subunit catalyzes the cyclization activity that produces IGP and AICAR from PRFAR using the ammonia provided by the HisH subunit.</text>
</comment>
<comment type="catalytic activity">
    <reaction evidence="1">
        <text>5-[(5-phospho-1-deoxy-D-ribulos-1-ylimino)methylamino]-1-(5-phospho-beta-D-ribosyl)imidazole-4-carboxamide + L-glutamine = D-erythro-1-(imidazol-4-yl)glycerol 3-phosphate + 5-amino-1-(5-phospho-beta-D-ribosyl)imidazole-4-carboxamide + L-glutamate + H(+)</text>
        <dbReference type="Rhea" id="RHEA:24793"/>
        <dbReference type="ChEBI" id="CHEBI:15378"/>
        <dbReference type="ChEBI" id="CHEBI:29985"/>
        <dbReference type="ChEBI" id="CHEBI:58278"/>
        <dbReference type="ChEBI" id="CHEBI:58359"/>
        <dbReference type="ChEBI" id="CHEBI:58475"/>
        <dbReference type="ChEBI" id="CHEBI:58525"/>
        <dbReference type="EC" id="4.3.2.10"/>
    </reaction>
</comment>
<comment type="pathway">
    <text evidence="1">Amino-acid biosynthesis; L-histidine biosynthesis; L-histidine from 5-phospho-alpha-D-ribose 1-diphosphate: step 5/9.</text>
</comment>
<comment type="subunit">
    <text evidence="1">Heterodimer of HisH and HisF.</text>
</comment>
<comment type="subcellular location">
    <subcellularLocation>
        <location evidence="1">Cytoplasm</location>
    </subcellularLocation>
</comment>
<comment type="similarity">
    <text evidence="1">Belongs to the HisA/HisF family.</text>
</comment>
<protein>
    <recommendedName>
        <fullName evidence="1">Imidazole glycerol phosphate synthase subunit HisF</fullName>
        <ecNumber evidence="1">4.3.2.10</ecNumber>
    </recommendedName>
    <alternativeName>
        <fullName evidence="1">IGP synthase cyclase subunit</fullName>
    </alternativeName>
    <alternativeName>
        <fullName evidence="1">IGP synthase subunit HisF</fullName>
    </alternativeName>
    <alternativeName>
        <fullName evidence="1">ImGP synthase subunit HisF</fullName>
        <shortName evidence="1">IGPS subunit HisF</shortName>
    </alternativeName>
</protein>
<gene>
    <name evidence="1" type="primary">hisF</name>
    <name type="ordered locus">OE_2268R</name>
</gene>
<organism>
    <name type="scientific">Halobacterium salinarum (strain ATCC 29341 / DSM 671 / R1)</name>
    <dbReference type="NCBI Taxonomy" id="478009"/>
    <lineage>
        <taxon>Archaea</taxon>
        <taxon>Methanobacteriati</taxon>
        <taxon>Methanobacteriota</taxon>
        <taxon>Stenosarchaea group</taxon>
        <taxon>Halobacteria</taxon>
        <taxon>Halobacteriales</taxon>
        <taxon>Halobacteriaceae</taxon>
        <taxon>Halobacterium</taxon>
        <taxon>Halobacterium salinarum NRC-34001</taxon>
    </lineage>
</organism>
<sequence>MTLTKRVIPCIDVDLDDDGEPAVYTGVNFEELAYTGDPVEMAKRYNEAGADEFVFLDITASAEGRETMLDTVSAVADEVFIPLTVGGGIRDTDDIRETLRAGADKVSINSGAIADPSLVDRGAKAFGSQCIVISVDARRRFDEQGQHYTQVDGESCWFECTVHGGREGTGMDAIEWVQEAQRRGAGELFVNSIDADGTQDGYDVPLTAAVCDAVSTPVIASSGCGAPGDMADAYDAGADAALAASIFHFDEYSIAETKETLADAGYPIRAPDA</sequence>
<name>HIS6_HALS3</name>
<accession>B0R4B2</accession>